<comment type="function">
    <text evidence="1">Catalyzes the decarboxylation of orotidine 5'-monophosphate (OMP) to uridine 5'-monophosphate (UMP).</text>
</comment>
<comment type="catalytic activity">
    <reaction evidence="1">
        <text>orotidine 5'-phosphate + H(+) = UMP + CO2</text>
        <dbReference type="Rhea" id="RHEA:11596"/>
        <dbReference type="ChEBI" id="CHEBI:15378"/>
        <dbReference type="ChEBI" id="CHEBI:16526"/>
        <dbReference type="ChEBI" id="CHEBI:57538"/>
        <dbReference type="ChEBI" id="CHEBI:57865"/>
        <dbReference type="EC" id="4.1.1.23"/>
    </reaction>
</comment>
<comment type="pathway">
    <text evidence="1">Pyrimidine metabolism; UMP biosynthesis via de novo pathway; UMP from orotate: step 2/2.</text>
</comment>
<comment type="subunit">
    <text evidence="1">Homodimer.</text>
</comment>
<comment type="similarity">
    <text evidence="1">Belongs to the OMP decarboxylase family. Type 1 subfamily.</text>
</comment>
<protein>
    <recommendedName>
        <fullName evidence="1">Orotidine 5'-phosphate decarboxylase</fullName>
        <ecNumber evidence="1">4.1.1.23</ecNumber>
    </recommendedName>
    <alternativeName>
        <fullName evidence="1">OMP decarboxylase</fullName>
        <shortName evidence="1">OMPDCase</shortName>
        <shortName evidence="1">OMPdecase</shortName>
    </alternativeName>
</protein>
<gene>
    <name evidence="1" type="primary">pyrF</name>
    <name type="ordered locus">SO_2398</name>
</gene>
<accession>Q8EEI4</accession>
<dbReference type="EC" id="4.1.1.23" evidence="1"/>
<dbReference type="EMBL" id="AE014299">
    <property type="protein sequence ID" value="AAN55432.1"/>
    <property type="molecule type" value="Genomic_DNA"/>
</dbReference>
<dbReference type="RefSeq" id="NP_717988.1">
    <property type="nucleotide sequence ID" value="NC_004347.2"/>
</dbReference>
<dbReference type="RefSeq" id="WP_011072377.1">
    <property type="nucleotide sequence ID" value="NC_004347.2"/>
</dbReference>
<dbReference type="SMR" id="Q8EEI4"/>
<dbReference type="STRING" id="211586.SO_2398"/>
<dbReference type="PaxDb" id="211586-SO_2398"/>
<dbReference type="KEGG" id="son:SO_2398"/>
<dbReference type="PATRIC" id="fig|211586.12.peg.2307"/>
<dbReference type="eggNOG" id="COG0284">
    <property type="taxonomic scope" value="Bacteria"/>
</dbReference>
<dbReference type="HOGENOM" id="CLU_067069_0_0_6"/>
<dbReference type="OrthoDB" id="9806203at2"/>
<dbReference type="PhylomeDB" id="Q8EEI4"/>
<dbReference type="BioCyc" id="SONE211586:G1GMP-2192-MONOMER"/>
<dbReference type="UniPathway" id="UPA00070">
    <property type="reaction ID" value="UER00120"/>
</dbReference>
<dbReference type="Proteomes" id="UP000008186">
    <property type="component" value="Chromosome"/>
</dbReference>
<dbReference type="GO" id="GO:0005829">
    <property type="term" value="C:cytosol"/>
    <property type="evidence" value="ECO:0000318"/>
    <property type="project" value="GO_Central"/>
</dbReference>
<dbReference type="GO" id="GO:0004590">
    <property type="term" value="F:orotidine-5'-phosphate decarboxylase activity"/>
    <property type="evidence" value="ECO:0000318"/>
    <property type="project" value="GO_Central"/>
</dbReference>
<dbReference type="GO" id="GO:0006207">
    <property type="term" value="P:'de novo' pyrimidine nucleobase biosynthetic process"/>
    <property type="evidence" value="ECO:0000318"/>
    <property type="project" value="GO_Central"/>
</dbReference>
<dbReference type="GO" id="GO:0044205">
    <property type="term" value="P:'de novo' UMP biosynthetic process"/>
    <property type="evidence" value="ECO:0007669"/>
    <property type="project" value="UniProtKB-UniRule"/>
</dbReference>
<dbReference type="CDD" id="cd04725">
    <property type="entry name" value="OMP_decarboxylase_like"/>
    <property type="match status" value="1"/>
</dbReference>
<dbReference type="FunFam" id="3.20.20.70:FF:000015">
    <property type="entry name" value="Orotidine 5'-phosphate decarboxylase"/>
    <property type="match status" value="1"/>
</dbReference>
<dbReference type="Gene3D" id="3.20.20.70">
    <property type="entry name" value="Aldolase class I"/>
    <property type="match status" value="1"/>
</dbReference>
<dbReference type="HAMAP" id="MF_01200_B">
    <property type="entry name" value="OMPdecase_type1_B"/>
    <property type="match status" value="1"/>
</dbReference>
<dbReference type="InterPro" id="IPR013785">
    <property type="entry name" value="Aldolase_TIM"/>
</dbReference>
<dbReference type="InterPro" id="IPR014732">
    <property type="entry name" value="OMPdecase"/>
</dbReference>
<dbReference type="InterPro" id="IPR018089">
    <property type="entry name" value="OMPdecase_AS"/>
</dbReference>
<dbReference type="InterPro" id="IPR047596">
    <property type="entry name" value="OMPdecase_bac"/>
</dbReference>
<dbReference type="InterPro" id="IPR001754">
    <property type="entry name" value="OMPdeCOase_dom"/>
</dbReference>
<dbReference type="InterPro" id="IPR011060">
    <property type="entry name" value="RibuloseP-bd_barrel"/>
</dbReference>
<dbReference type="NCBIfam" id="NF001273">
    <property type="entry name" value="PRK00230.1"/>
    <property type="match status" value="1"/>
</dbReference>
<dbReference type="NCBIfam" id="TIGR01740">
    <property type="entry name" value="pyrF"/>
    <property type="match status" value="1"/>
</dbReference>
<dbReference type="PANTHER" id="PTHR32119">
    <property type="entry name" value="OROTIDINE 5'-PHOSPHATE DECARBOXYLASE"/>
    <property type="match status" value="1"/>
</dbReference>
<dbReference type="PANTHER" id="PTHR32119:SF2">
    <property type="entry name" value="OROTIDINE 5'-PHOSPHATE DECARBOXYLASE"/>
    <property type="match status" value="1"/>
</dbReference>
<dbReference type="Pfam" id="PF00215">
    <property type="entry name" value="OMPdecase"/>
    <property type="match status" value="1"/>
</dbReference>
<dbReference type="SMART" id="SM00934">
    <property type="entry name" value="OMPdecase"/>
    <property type="match status" value="1"/>
</dbReference>
<dbReference type="SUPFAM" id="SSF51366">
    <property type="entry name" value="Ribulose-phoshate binding barrel"/>
    <property type="match status" value="1"/>
</dbReference>
<dbReference type="PROSITE" id="PS00156">
    <property type="entry name" value="OMPDECASE"/>
    <property type="match status" value="1"/>
</dbReference>
<name>PYRF_SHEON</name>
<feature type="chain" id="PRO_0000134572" description="Orotidine 5'-phosphate decarboxylase">
    <location>
        <begin position="1"/>
        <end position="231"/>
    </location>
</feature>
<feature type="active site" description="Proton donor" evidence="1">
    <location>
        <position position="62"/>
    </location>
</feature>
<feature type="binding site" evidence="1">
    <location>
        <position position="11"/>
    </location>
    <ligand>
        <name>substrate</name>
    </ligand>
</feature>
<feature type="binding site" evidence="1">
    <location>
        <position position="33"/>
    </location>
    <ligand>
        <name>substrate</name>
    </ligand>
</feature>
<feature type="binding site" evidence="1">
    <location>
        <begin position="60"/>
        <end position="69"/>
    </location>
    <ligand>
        <name>substrate</name>
    </ligand>
</feature>
<feature type="binding site" evidence="1">
    <location>
        <position position="120"/>
    </location>
    <ligand>
        <name>substrate</name>
    </ligand>
</feature>
<feature type="binding site" evidence="1">
    <location>
        <position position="181"/>
    </location>
    <ligand>
        <name>substrate</name>
    </ligand>
</feature>
<feature type="binding site" evidence="1">
    <location>
        <position position="190"/>
    </location>
    <ligand>
        <name>substrate</name>
    </ligand>
</feature>
<feature type="binding site" evidence="1">
    <location>
        <position position="210"/>
    </location>
    <ligand>
        <name>substrate</name>
    </ligand>
</feature>
<feature type="binding site" evidence="1">
    <location>
        <position position="211"/>
    </location>
    <ligand>
        <name>substrate</name>
    </ligand>
</feature>
<organism>
    <name type="scientific">Shewanella oneidensis (strain ATCC 700550 / JCM 31522 / CIP 106686 / LMG 19005 / NCIMB 14063 / MR-1)</name>
    <dbReference type="NCBI Taxonomy" id="211586"/>
    <lineage>
        <taxon>Bacteria</taxon>
        <taxon>Pseudomonadati</taxon>
        <taxon>Pseudomonadota</taxon>
        <taxon>Gammaproteobacteria</taxon>
        <taxon>Alteromonadales</taxon>
        <taxon>Shewanellaceae</taxon>
        <taxon>Shewanella</taxon>
    </lineage>
</organism>
<keyword id="KW-0210">Decarboxylase</keyword>
<keyword id="KW-0456">Lyase</keyword>
<keyword id="KW-0665">Pyrimidine biosynthesis</keyword>
<keyword id="KW-1185">Reference proteome</keyword>
<sequence length="231" mass="24985">MTTKPILVALDYDNKNHALQLIDQLDPNMCRLKVGKEMFTLFGPQLVKDIHERGFDLFLDLKFHDIPNTVAKAVTAAAELGVWMTNVHASGGLAMMEAAKKALQPYGKEAPMLIAVTVLTSMSDEDLKLIGIDVPAFEHVQRLAKLTKQAELDGVVCSAQEASILKSLLGQDFKLITPGIRPVGSDVGDQHRVMTPPEALAAGADYLVIGRPITKATDPLAALQAIHQSLV</sequence>
<evidence type="ECO:0000255" key="1">
    <source>
        <dbReference type="HAMAP-Rule" id="MF_01200"/>
    </source>
</evidence>
<proteinExistence type="inferred from homology"/>
<reference key="1">
    <citation type="journal article" date="2002" name="Nat. Biotechnol.">
        <title>Genome sequence of the dissimilatory metal ion-reducing bacterium Shewanella oneidensis.</title>
        <authorList>
            <person name="Heidelberg J.F."/>
            <person name="Paulsen I.T."/>
            <person name="Nelson K.E."/>
            <person name="Gaidos E.J."/>
            <person name="Nelson W.C."/>
            <person name="Read T.D."/>
            <person name="Eisen J.A."/>
            <person name="Seshadri R."/>
            <person name="Ward N.L."/>
            <person name="Methe B.A."/>
            <person name="Clayton R.A."/>
            <person name="Meyer T."/>
            <person name="Tsapin A."/>
            <person name="Scott J."/>
            <person name="Beanan M.J."/>
            <person name="Brinkac L.M."/>
            <person name="Daugherty S.C."/>
            <person name="DeBoy R.T."/>
            <person name="Dodson R.J."/>
            <person name="Durkin A.S."/>
            <person name="Haft D.H."/>
            <person name="Kolonay J.F."/>
            <person name="Madupu R."/>
            <person name="Peterson J.D."/>
            <person name="Umayam L.A."/>
            <person name="White O."/>
            <person name="Wolf A.M."/>
            <person name="Vamathevan J.J."/>
            <person name="Weidman J.F."/>
            <person name="Impraim M."/>
            <person name="Lee K."/>
            <person name="Berry K.J."/>
            <person name="Lee C."/>
            <person name="Mueller J."/>
            <person name="Khouri H.M."/>
            <person name="Gill J."/>
            <person name="Utterback T.R."/>
            <person name="McDonald L.A."/>
            <person name="Feldblyum T.V."/>
            <person name="Smith H.O."/>
            <person name="Venter J.C."/>
            <person name="Nealson K.H."/>
            <person name="Fraser C.M."/>
        </authorList>
    </citation>
    <scope>NUCLEOTIDE SEQUENCE [LARGE SCALE GENOMIC DNA]</scope>
    <source>
        <strain>ATCC 700550 / JCM 31522 / CIP 106686 / LMG 19005 / NCIMB 14063 / MR-1</strain>
    </source>
</reference>